<name>SSDH_MOUSE</name>
<dbReference type="EC" id="1.2.1.24"/>
<dbReference type="EMBL" id="AK052703">
    <property type="protein sequence ID" value="BAC35105.1"/>
    <property type="molecule type" value="mRNA"/>
</dbReference>
<dbReference type="EMBL" id="AK144030">
    <property type="protein sequence ID" value="BAE25663.1"/>
    <property type="molecule type" value="mRNA"/>
</dbReference>
<dbReference type="EMBL" id="AL589699">
    <property type="protein sequence ID" value="CAI26086.1"/>
    <property type="molecule type" value="Genomic_DNA"/>
</dbReference>
<dbReference type="CCDS" id="CCDS26383.1"/>
<dbReference type="RefSeq" id="NP_766120.1">
    <property type="nucleotide sequence ID" value="NM_172532.3"/>
</dbReference>
<dbReference type="SMR" id="Q8BWF0"/>
<dbReference type="BioGRID" id="229542">
    <property type="interactions" value="14"/>
</dbReference>
<dbReference type="FunCoup" id="Q8BWF0">
    <property type="interactions" value="1464"/>
</dbReference>
<dbReference type="IntAct" id="Q8BWF0">
    <property type="interactions" value="2"/>
</dbReference>
<dbReference type="MINT" id="Q8BWF0"/>
<dbReference type="STRING" id="10090.ENSMUSP00000040591"/>
<dbReference type="GlyGen" id="Q8BWF0">
    <property type="glycosylation" value="2 sites, 1 N-linked glycan (1 site), 1 O-linked glycan (1 site)"/>
</dbReference>
<dbReference type="iPTMnet" id="Q8BWF0"/>
<dbReference type="MetOSite" id="Q8BWF0"/>
<dbReference type="PhosphoSitePlus" id="Q8BWF0"/>
<dbReference type="SwissPalm" id="Q8BWF0"/>
<dbReference type="jPOST" id="Q8BWF0"/>
<dbReference type="PaxDb" id="10090-ENSMUSP00000040591"/>
<dbReference type="PeptideAtlas" id="Q8BWF0"/>
<dbReference type="ProteomicsDB" id="257075"/>
<dbReference type="Pumba" id="Q8BWF0"/>
<dbReference type="Antibodypedia" id="25307">
    <property type="antibodies" value="445 antibodies from 33 providers"/>
</dbReference>
<dbReference type="DNASU" id="214579"/>
<dbReference type="Ensembl" id="ENSMUST00000037615.7">
    <property type="protein sequence ID" value="ENSMUSP00000040591.7"/>
    <property type="gene ID" value="ENSMUSG00000035936.7"/>
</dbReference>
<dbReference type="GeneID" id="214579"/>
<dbReference type="KEGG" id="mmu:214579"/>
<dbReference type="UCSC" id="uc007pwp.2">
    <property type="organism name" value="mouse"/>
</dbReference>
<dbReference type="AGR" id="MGI:2441982"/>
<dbReference type="CTD" id="7915"/>
<dbReference type="MGI" id="MGI:2441982">
    <property type="gene designation" value="Aldh5a1"/>
</dbReference>
<dbReference type="VEuPathDB" id="HostDB:ENSMUSG00000035936"/>
<dbReference type="eggNOG" id="KOG2451">
    <property type="taxonomic scope" value="Eukaryota"/>
</dbReference>
<dbReference type="GeneTree" id="ENSGT00930000151038"/>
<dbReference type="HOGENOM" id="CLU_005391_5_3_1"/>
<dbReference type="InParanoid" id="Q8BWF0"/>
<dbReference type="OMA" id="IGELFCK"/>
<dbReference type="OrthoDB" id="310895at2759"/>
<dbReference type="PhylomeDB" id="Q8BWF0"/>
<dbReference type="TreeFam" id="TF352906"/>
<dbReference type="BRENDA" id="1.2.1.24">
    <property type="organism ID" value="3474"/>
</dbReference>
<dbReference type="Reactome" id="R-MMU-916853">
    <property type="pathway name" value="Degradation of GABA"/>
</dbReference>
<dbReference type="UniPathway" id="UPA00733"/>
<dbReference type="BioGRID-ORCS" id="214579">
    <property type="hits" value="1 hit in 76 CRISPR screens"/>
</dbReference>
<dbReference type="ChiTaRS" id="Aldh5a1">
    <property type="organism name" value="mouse"/>
</dbReference>
<dbReference type="PRO" id="PR:Q8BWF0"/>
<dbReference type="Proteomes" id="UP000000589">
    <property type="component" value="Chromosome 13"/>
</dbReference>
<dbReference type="RNAct" id="Q8BWF0">
    <property type="molecule type" value="protein"/>
</dbReference>
<dbReference type="Bgee" id="ENSMUSG00000035936">
    <property type="expression patterns" value="Expressed in dorsal tegmental nucleus and 210 other cell types or tissues"/>
</dbReference>
<dbReference type="ExpressionAtlas" id="Q8BWF0">
    <property type="expression patterns" value="baseline and differential"/>
</dbReference>
<dbReference type="GO" id="GO:0005739">
    <property type="term" value="C:mitochondrion"/>
    <property type="evidence" value="ECO:0000314"/>
    <property type="project" value="UniProtKB"/>
</dbReference>
<dbReference type="GO" id="GO:0045202">
    <property type="term" value="C:synapse"/>
    <property type="evidence" value="ECO:0007669"/>
    <property type="project" value="GOC"/>
</dbReference>
<dbReference type="GO" id="GO:0042802">
    <property type="term" value="F:identical protein binding"/>
    <property type="evidence" value="ECO:0007669"/>
    <property type="project" value="Ensembl"/>
</dbReference>
<dbReference type="GO" id="GO:0004777">
    <property type="term" value="F:succinate-semialdehyde dehydrogenase (NAD+) activity"/>
    <property type="evidence" value="ECO:0000250"/>
    <property type="project" value="UniProtKB"/>
</dbReference>
<dbReference type="GO" id="GO:0007417">
    <property type="term" value="P:central nervous system development"/>
    <property type="evidence" value="ECO:0000250"/>
    <property type="project" value="UniProtKB"/>
</dbReference>
<dbReference type="GO" id="GO:0009450">
    <property type="term" value="P:gamma-aminobutyric acid catabolic process"/>
    <property type="evidence" value="ECO:0000315"/>
    <property type="project" value="MGI"/>
</dbReference>
<dbReference type="GO" id="GO:0009448">
    <property type="term" value="P:gamma-aminobutyric acid metabolic process"/>
    <property type="evidence" value="ECO:0000315"/>
    <property type="project" value="MGI"/>
</dbReference>
<dbReference type="GO" id="GO:0006536">
    <property type="term" value="P:glutamate metabolic process"/>
    <property type="evidence" value="ECO:0000315"/>
    <property type="project" value="MGI"/>
</dbReference>
<dbReference type="GO" id="GO:0009791">
    <property type="term" value="P:post-embryonic development"/>
    <property type="evidence" value="ECO:0000315"/>
    <property type="project" value="MGI"/>
</dbReference>
<dbReference type="GO" id="GO:0006105">
    <property type="term" value="P:succinate metabolic process"/>
    <property type="evidence" value="ECO:0000315"/>
    <property type="project" value="MGI"/>
</dbReference>
<dbReference type="GO" id="GO:0051932">
    <property type="term" value="P:synaptic transmission, GABAergic"/>
    <property type="evidence" value="ECO:0000315"/>
    <property type="project" value="MGI"/>
</dbReference>
<dbReference type="CDD" id="cd07103">
    <property type="entry name" value="ALDH_F5_SSADH_GabD"/>
    <property type="match status" value="1"/>
</dbReference>
<dbReference type="FunFam" id="3.40.605.10:FF:000026">
    <property type="entry name" value="Aldehyde dehydrogenase, putative"/>
    <property type="match status" value="1"/>
</dbReference>
<dbReference type="FunFam" id="3.40.309.10:FF:000004">
    <property type="entry name" value="Succinate-semialdehyde dehydrogenase I"/>
    <property type="match status" value="1"/>
</dbReference>
<dbReference type="FunFam" id="3.40.605.10:FF:000096">
    <property type="entry name" value="Succinate-semialdehyde dehydrogenase, mitochondrial"/>
    <property type="match status" value="1"/>
</dbReference>
<dbReference type="Gene3D" id="3.40.605.10">
    <property type="entry name" value="Aldehyde Dehydrogenase, Chain A, domain 1"/>
    <property type="match status" value="1"/>
</dbReference>
<dbReference type="Gene3D" id="3.40.309.10">
    <property type="entry name" value="Aldehyde Dehydrogenase, Chain A, domain 2"/>
    <property type="match status" value="1"/>
</dbReference>
<dbReference type="InterPro" id="IPR016161">
    <property type="entry name" value="Ald_DH/histidinol_DH"/>
</dbReference>
<dbReference type="InterPro" id="IPR016163">
    <property type="entry name" value="Ald_DH_C"/>
</dbReference>
<dbReference type="InterPro" id="IPR016160">
    <property type="entry name" value="Ald_DH_CS_CYS"/>
</dbReference>
<dbReference type="InterPro" id="IPR029510">
    <property type="entry name" value="Ald_DH_CS_GLU"/>
</dbReference>
<dbReference type="InterPro" id="IPR016162">
    <property type="entry name" value="Ald_DH_N"/>
</dbReference>
<dbReference type="InterPro" id="IPR015590">
    <property type="entry name" value="Aldehyde_DH_dom"/>
</dbReference>
<dbReference type="InterPro" id="IPR050740">
    <property type="entry name" value="Aldehyde_DH_Superfamily"/>
</dbReference>
<dbReference type="InterPro" id="IPR010102">
    <property type="entry name" value="Succ_semiAld_DH"/>
</dbReference>
<dbReference type="NCBIfam" id="TIGR01780">
    <property type="entry name" value="SSADH"/>
    <property type="match status" value="1"/>
</dbReference>
<dbReference type="PANTHER" id="PTHR43353">
    <property type="entry name" value="SUCCINATE-SEMIALDEHYDE DEHYDROGENASE, MITOCHONDRIAL"/>
    <property type="match status" value="1"/>
</dbReference>
<dbReference type="PANTHER" id="PTHR43353:SF5">
    <property type="entry name" value="SUCCINATE-SEMIALDEHYDE DEHYDROGENASE, MITOCHONDRIAL"/>
    <property type="match status" value="1"/>
</dbReference>
<dbReference type="Pfam" id="PF00171">
    <property type="entry name" value="Aldedh"/>
    <property type="match status" value="1"/>
</dbReference>
<dbReference type="SUPFAM" id="SSF53720">
    <property type="entry name" value="ALDH-like"/>
    <property type="match status" value="1"/>
</dbReference>
<dbReference type="PROSITE" id="PS00070">
    <property type="entry name" value="ALDEHYDE_DEHYDR_CYS"/>
    <property type="match status" value="1"/>
</dbReference>
<dbReference type="PROSITE" id="PS00687">
    <property type="entry name" value="ALDEHYDE_DEHYDR_GLU"/>
    <property type="match status" value="1"/>
</dbReference>
<proteinExistence type="evidence at protein level"/>
<gene>
    <name type="primary">Aldh5a1</name>
</gene>
<evidence type="ECO:0000250" key="1"/>
<evidence type="ECO:0000250" key="2">
    <source>
        <dbReference type="UniProtKB" id="P51649"/>
    </source>
</evidence>
<evidence type="ECO:0000255" key="3">
    <source>
        <dbReference type="PROSITE-ProRule" id="PRU10007"/>
    </source>
</evidence>
<evidence type="ECO:0000255" key="4">
    <source>
        <dbReference type="PROSITE-ProRule" id="PRU10008"/>
    </source>
</evidence>
<evidence type="ECO:0000305" key="5"/>
<evidence type="ECO:0007744" key="6">
    <source>
    </source>
</evidence>
<evidence type="ECO:0007744" key="7">
    <source>
    </source>
</evidence>
<evidence type="ECO:0007744" key="8">
    <source>
    </source>
</evidence>
<sequence length="523" mass="55968">MATCFLLRSFWAARPALPPPGRFRPEPAGTPRRSYASGPGGLHADLLRGDSFVGGRWLPAPATFPVYDPASGAKLGTVADCGVPEARAAVRAAYDAFNSWKGVSVKERSLLLRKWYDLMIQNKDDLAKIITAESGKPLKEAQGEILYSALFLEWFSEEARRIYGDIIYTSAKDKRGLVLKQPVGVAAIITPWNFPSAMITRKVGAALAAGCTVVVKPAEDTPYSALALAQLANQAGIPAGVYNVIPCSRNKAKEVGEVLCTDPLVSKISFTGSTATGKILLHHAANSVKRVSMELGGLAPFIVFDSANVDQAVAGAMASKFRNAGQTCVCSNRFLVQRGIHDSFVTKFAEAMKKSLRVGNGFEEGTTQGPLINEKAVEKVEKQVNDAVAKGATVVTGGKRHQSGGNFFEPTLLSNVTRDMLCITEETFGPLAPVIKFDKEEEAVAIANAAEVGLAGYFYSQDPAQIWRVAEQLEVGMVGVNEGLISSVECPFGGVKQSGLGREGSKYGIDEYLEVKYVCYGGL</sequence>
<protein>
    <recommendedName>
        <fullName>Succinate-semialdehyde dehydrogenase, mitochondrial</fullName>
        <ecNumber>1.2.1.24</ecNumber>
    </recommendedName>
    <alternativeName>
        <fullName>Aldehyde dehydrogenase family 5 member A1</fullName>
    </alternativeName>
    <alternativeName>
        <fullName>NAD(+)-dependent succinic semialdehyde dehydrogenase</fullName>
    </alternativeName>
</protein>
<feature type="transit peptide" description="Mitochondrion" evidence="1">
    <location>
        <begin position="1"/>
        <end position="35"/>
    </location>
</feature>
<feature type="chain" id="PRO_0000007185" description="Succinate-semialdehyde dehydrogenase, mitochondrial">
    <location>
        <begin position="36"/>
        <end position="523"/>
    </location>
</feature>
<feature type="active site" description="Proton acceptor" evidence="3 4">
    <location>
        <position position="294"/>
    </location>
</feature>
<feature type="active site" description="Nucleophile" evidence="3 4">
    <location>
        <position position="328"/>
    </location>
</feature>
<feature type="binding site" evidence="1">
    <location>
        <position position="201"/>
    </location>
    <ligand>
        <name>NAD(+)</name>
        <dbReference type="ChEBI" id="CHEBI:57540"/>
    </ligand>
</feature>
<feature type="binding site" evidence="1">
    <location>
        <position position="201"/>
    </location>
    <ligand>
        <name>substrate</name>
    </ligand>
</feature>
<feature type="binding site" evidence="1">
    <location>
        <begin position="216"/>
        <end position="219"/>
    </location>
    <ligand>
        <name>NAD(+)</name>
        <dbReference type="ChEBI" id="CHEBI:57540"/>
    </ligand>
</feature>
<feature type="binding site" evidence="1">
    <location>
        <begin position="272"/>
        <end position="277"/>
    </location>
    <ligand>
        <name>NAD(+)</name>
        <dbReference type="ChEBI" id="CHEBI:57540"/>
    </ligand>
</feature>
<feature type="binding site" evidence="1">
    <location>
        <position position="322"/>
    </location>
    <ligand>
        <name>substrate</name>
    </ligand>
</feature>
<feature type="binding site" evidence="1">
    <location>
        <position position="486"/>
    </location>
    <ligand>
        <name>substrate</name>
    </ligand>
</feature>
<feature type="site" description="Transition state stabilizer" evidence="1">
    <location>
        <position position="193"/>
    </location>
</feature>
<feature type="modified residue" description="N6-acetyllysine" evidence="7">
    <location>
        <position position="74"/>
    </location>
</feature>
<feature type="modified residue" description="N6-acetyllysine; alternate" evidence="7">
    <location>
        <position position="114"/>
    </location>
</feature>
<feature type="modified residue" description="N6-succinyllysine; alternate" evidence="8">
    <location>
        <position position="114"/>
    </location>
</feature>
<feature type="modified residue" description="N6-succinyllysine" evidence="8">
    <location>
        <position position="123"/>
    </location>
</feature>
<feature type="modified residue" description="N6-acetyllysine" evidence="7">
    <location>
        <position position="128"/>
    </location>
</feature>
<feature type="modified residue" description="N6-succinyllysine" evidence="8">
    <location>
        <position position="172"/>
    </location>
</feature>
<feature type="modified residue" description="N6-acetyllysine; alternate" evidence="7">
    <location>
        <position position="253"/>
    </location>
</feature>
<feature type="modified residue" description="N6-succinyllysine; alternate" evidence="8">
    <location>
        <position position="253"/>
    </location>
</feature>
<feature type="modified residue" description="N6-acetyllysine; alternate" evidence="7">
    <location>
        <position position="347"/>
    </location>
</feature>
<feature type="modified residue" description="N6-succinyllysine; alternate" evidence="8">
    <location>
        <position position="347"/>
    </location>
</feature>
<feature type="modified residue" description="N6-acetyllysine" evidence="7">
    <location>
        <position position="353"/>
    </location>
</feature>
<feature type="modified residue" description="N6-succinyllysine" evidence="8">
    <location>
        <position position="390"/>
    </location>
</feature>
<feature type="modified residue" description="N6-acetyllysine" evidence="7">
    <location>
        <position position="399"/>
    </location>
</feature>
<feature type="modified residue" description="Phosphoserine" evidence="6">
    <location>
        <position position="403"/>
    </location>
</feature>
<feature type="modified residue" description="Phosphoserine" evidence="2">
    <location>
        <position position="487"/>
    </location>
</feature>
<feature type="disulfide bond" description="In inhibited form" evidence="1">
    <location>
        <begin position="328"/>
        <end position="330"/>
    </location>
</feature>
<reference key="1">
    <citation type="journal article" date="2005" name="Science">
        <title>The transcriptional landscape of the mammalian genome.</title>
        <authorList>
            <person name="Carninci P."/>
            <person name="Kasukawa T."/>
            <person name="Katayama S."/>
            <person name="Gough J."/>
            <person name="Frith M.C."/>
            <person name="Maeda N."/>
            <person name="Oyama R."/>
            <person name="Ravasi T."/>
            <person name="Lenhard B."/>
            <person name="Wells C."/>
            <person name="Kodzius R."/>
            <person name="Shimokawa K."/>
            <person name="Bajic V.B."/>
            <person name="Brenner S.E."/>
            <person name="Batalov S."/>
            <person name="Forrest A.R."/>
            <person name="Zavolan M."/>
            <person name="Davis M.J."/>
            <person name="Wilming L.G."/>
            <person name="Aidinis V."/>
            <person name="Allen J.E."/>
            <person name="Ambesi-Impiombato A."/>
            <person name="Apweiler R."/>
            <person name="Aturaliya R.N."/>
            <person name="Bailey T.L."/>
            <person name="Bansal M."/>
            <person name="Baxter L."/>
            <person name="Beisel K.W."/>
            <person name="Bersano T."/>
            <person name="Bono H."/>
            <person name="Chalk A.M."/>
            <person name="Chiu K.P."/>
            <person name="Choudhary V."/>
            <person name="Christoffels A."/>
            <person name="Clutterbuck D.R."/>
            <person name="Crowe M.L."/>
            <person name="Dalla E."/>
            <person name="Dalrymple B.P."/>
            <person name="de Bono B."/>
            <person name="Della Gatta G."/>
            <person name="di Bernardo D."/>
            <person name="Down T."/>
            <person name="Engstrom P."/>
            <person name="Fagiolini M."/>
            <person name="Faulkner G."/>
            <person name="Fletcher C.F."/>
            <person name="Fukushima T."/>
            <person name="Furuno M."/>
            <person name="Futaki S."/>
            <person name="Gariboldi M."/>
            <person name="Georgii-Hemming P."/>
            <person name="Gingeras T.R."/>
            <person name="Gojobori T."/>
            <person name="Green R.E."/>
            <person name="Gustincich S."/>
            <person name="Harbers M."/>
            <person name="Hayashi Y."/>
            <person name="Hensch T.K."/>
            <person name="Hirokawa N."/>
            <person name="Hill D."/>
            <person name="Huminiecki L."/>
            <person name="Iacono M."/>
            <person name="Ikeo K."/>
            <person name="Iwama A."/>
            <person name="Ishikawa T."/>
            <person name="Jakt M."/>
            <person name="Kanapin A."/>
            <person name="Katoh M."/>
            <person name="Kawasawa Y."/>
            <person name="Kelso J."/>
            <person name="Kitamura H."/>
            <person name="Kitano H."/>
            <person name="Kollias G."/>
            <person name="Krishnan S.P."/>
            <person name="Kruger A."/>
            <person name="Kummerfeld S.K."/>
            <person name="Kurochkin I.V."/>
            <person name="Lareau L.F."/>
            <person name="Lazarevic D."/>
            <person name="Lipovich L."/>
            <person name="Liu J."/>
            <person name="Liuni S."/>
            <person name="McWilliam S."/>
            <person name="Madan Babu M."/>
            <person name="Madera M."/>
            <person name="Marchionni L."/>
            <person name="Matsuda H."/>
            <person name="Matsuzawa S."/>
            <person name="Miki H."/>
            <person name="Mignone F."/>
            <person name="Miyake S."/>
            <person name="Morris K."/>
            <person name="Mottagui-Tabar S."/>
            <person name="Mulder N."/>
            <person name="Nakano N."/>
            <person name="Nakauchi H."/>
            <person name="Ng P."/>
            <person name="Nilsson R."/>
            <person name="Nishiguchi S."/>
            <person name="Nishikawa S."/>
            <person name="Nori F."/>
            <person name="Ohara O."/>
            <person name="Okazaki Y."/>
            <person name="Orlando V."/>
            <person name="Pang K.C."/>
            <person name="Pavan W.J."/>
            <person name="Pavesi G."/>
            <person name="Pesole G."/>
            <person name="Petrovsky N."/>
            <person name="Piazza S."/>
            <person name="Reed J."/>
            <person name="Reid J.F."/>
            <person name="Ring B.Z."/>
            <person name="Ringwald M."/>
            <person name="Rost B."/>
            <person name="Ruan Y."/>
            <person name="Salzberg S.L."/>
            <person name="Sandelin A."/>
            <person name="Schneider C."/>
            <person name="Schoenbach C."/>
            <person name="Sekiguchi K."/>
            <person name="Semple C.A."/>
            <person name="Seno S."/>
            <person name="Sessa L."/>
            <person name="Sheng Y."/>
            <person name="Shibata Y."/>
            <person name="Shimada H."/>
            <person name="Shimada K."/>
            <person name="Silva D."/>
            <person name="Sinclair B."/>
            <person name="Sperling S."/>
            <person name="Stupka E."/>
            <person name="Sugiura K."/>
            <person name="Sultana R."/>
            <person name="Takenaka Y."/>
            <person name="Taki K."/>
            <person name="Tammoja K."/>
            <person name="Tan S.L."/>
            <person name="Tang S."/>
            <person name="Taylor M.S."/>
            <person name="Tegner J."/>
            <person name="Teichmann S.A."/>
            <person name="Ueda H.R."/>
            <person name="van Nimwegen E."/>
            <person name="Verardo R."/>
            <person name="Wei C.L."/>
            <person name="Yagi K."/>
            <person name="Yamanishi H."/>
            <person name="Zabarovsky E."/>
            <person name="Zhu S."/>
            <person name="Zimmer A."/>
            <person name="Hide W."/>
            <person name="Bult C."/>
            <person name="Grimmond S.M."/>
            <person name="Teasdale R.D."/>
            <person name="Liu E.T."/>
            <person name="Brusic V."/>
            <person name="Quackenbush J."/>
            <person name="Wahlestedt C."/>
            <person name="Mattick J.S."/>
            <person name="Hume D.A."/>
            <person name="Kai C."/>
            <person name="Sasaki D."/>
            <person name="Tomaru Y."/>
            <person name="Fukuda S."/>
            <person name="Kanamori-Katayama M."/>
            <person name="Suzuki M."/>
            <person name="Aoki J."/>
            <person name="Arakawa T."/>
            <person name="Iida J."/>
            <person name="Imamura K."/>
            <person name="Itoh M."/>
            <person name="Kato T."/>
            <person name="Kawaji H."/>
            <person name="Kawagashira N."/>
            <person name="Kawashima T."/>
            <person name="Kojima M."/>
            <person name="Kondo S."/>
            <person name="Konno H."/>
            <person name="Nakano K."/>
            <person name="Ninomiya N."/>
            <person name="Nishio T."/>
            <person name="Okada M."/>
            <person name="Plessy C."/>
            <person name="Shibata K."/>
            <person name="Shiraki T."/>
            <person name="Suzuki S."/>
            <person name="Tagami M."/>
            <person name="Waki K."/>
            <person name="Watahiki A."/>
            <person name="Okamura-Oho Y."/>
            <person name="Suzuki H."/>
            <person name="Kawai J."/>
            <person name="Hayashizaki Y."/>
        </authorList>
    </citation>
    <scope>NUCLEOTIDE SEQUENCE [LARGE SCALE MRNA]</scope>
    <source>
        <strain>C57BL/6J</strain>
        <tissue>Kidney</tissue>
    </source>
</reference>
<reference key="2">
    <citation type="journal article" date="2009" name="PLoS Biol.">
        <title>Lineage-specific biology revealed by a finished genome assembly of the mouse.</title>
        <authorList>
            <person name="Church D.M."/>
            <person name="Goodstadt L."/>
            <person name="Hillier L.W."/>
            <person name="Zody M.C."/>
            <person name="Goldstein S."/>
            <person name="She X."/>
            <person name="Bult C.J."/>
            <person name="Agarwala R."/>
            <person name="Cherry J.L."/>
            <person name="DiCuccio M."/>
            <person name="Hlavina W."/>
            <person name="Kapustin Y."/>
            <person name="Meric P."/>
            <person name="Maglott D."/>
            <person name="Birtle Z."/>
            <person name="Marques A.C."/>
            <person name="Graves T."/>
            <person name="Zhou S."/>
            <person name="Teague B."/>
            <person name="Potamousis K."/>
            <person name="Churas C."/>
            <person name="Place M."/>
            <person name="Herschleb J."/>
            <person name="Runnheim R."/>
            <person name="Forrest D."/>
            <person name="Amos-Landgraf J."/>
            <person name="Schwartz D.C."/>
            <person name="Cheng Z."/>
            <person name="Lindblad-Toh K."/>
            <person name="Eichler E.E."/>
            <person name="Ponting C.P."/>
        </authorList>
    </citation>
    <scope>NUCLEOTIDE SEQUENCE [LARGE SCALE GENOMIC DNA]</scope>
    <source>
        <strain>C57BL/6J</strain>
    </source>
</reference>
<reference key="3">
    <citation type="submission" date="2009-01" db="UniProtKB">
        <authorList>
            <person name="Lubec G."/>
            <person name="Klug S."/>
            <person name="Kang S.U."/>
            <person name="Sunyer B."/>
            <person name="Chen W.-Q."/>
        </authorList>
    </citation>
    <scope>PROTEIN SEQUENCE OF 57-87; 115-123; 129-160; 162-172; 181-201; 254-289; 291-320; 323-333; 339-347; 358-375; 401-436; 469-496 AND 507-516</scope>
    <scope>IDENTIFICATION BY MASS SPECTROMETRY</scope>
    <source>
        <strain>C57BL/6J</strain>
        <strain>OF1</strain>
        <tissue>Brain</tissue>
        <tissue>Hippocampus</tissue>
    </source>
</reference>
<reference key="4">
    <citation type="journal article" date="2010" name="Cell">
        <title>A tissue-specific atlas of mouse protein phosphorylation and expression.</title>
        <authorList>
            <person name="Huttlin E.L."/>
            <person name="Jedrychowski M.P."/>
            <person name="Elias J.E."/>
            <person name="Goswami T."/>
            <person name="Rad R."/>
            <person name="Beausoleil S.A."/>
            <person name="Villen J."/>
            <person name="Haas W."/>
            <person name="Sowa M.E."/>
            <person name="Gygi S.P."/>
        </authorList>
    </citation>
    <scope>PHOSPHORYLATION [LARGE SCALE ANALYSIS] AT SER-403</scope>
    <scope>IDENTIFICATION BY MASS SPECTROMETRY [LARGE SCALE ANALYSIS]</scope>
    <source>
        <tissue>Brain</tissue>
        <tissue>Brown adipose tissue</tissue>
        <tissue>Heart</tissue>
        <tissue>Kidney</tissue>
        <tissue>Liver</tissue>
        <tissue>Lung</tissue>
        <tissue>Pancreas</tissue>
        <tissue>Testis</tissue>
    </source>
</reference>
<reference key="5">
    <citation type="journal article" date="2013" name="Mol. Cell">
        <title>SIRT5-mediated lysine desuccinylation impacts diverse metabolic pathways.</title>
        <authorList>
            <person name="Park J."/>
            <person name="Chen Y."/>
            <person name="Tishkoff D.X."/>
            <person name="Peng C."/>
            <person name="Tan M."/>
            <person name="Dai L."/>
            <person name="Xie Z."/>
            <person name="Zhang Y."/>
            <person name="Zwaans B.M."/>
            <person name="Skinner M.E."/>
            <person name="Lombard D.B."/>
            <person name="Zhao Y."/>
        </authorList>
    </citation>
    <scope>SUCCINYLATION [LARGE SCALE ANALYSIS] AT LYS-114; LYS-123; LYS-172; LYS-253; LYS-347 AND LYS-390</scope>
    <scope>IDENTIFICATION BY MASS SPECTROMETRY [LARGE SCALE ANALYSIS]</scope>
    <source>
        <tissue>Liver</tissue>
    </source>
</reference>
<reference key="6">
    <citation type="journal article" date="2013" name="Proc. Natl. Acad. Sci. U.S.A.">
        <title>Label-free quantitative proteomics of the lysine acetylome in mitochondria identifies substrates of SIRT3 in metabolic pathways.</title>
        <authorList>
            <person name="Rardin M.J."/>
            <person name="Newman J.C."/>
            <person name="Held J.M."/>
            <person name="Cusack M.P."/>
            <person name="Sorensen D.J."/>
            <person name="Li B."/>
            <person name="Schilling B."/>
            <person name="Mooney S.D."/>
            <person name="Kahn C.R."/>
            <person name="Verdin E."/>
            <person name="Gibson B.W."/>
        </authorList>
    </citation>
    <scope>ACETYLATION [LARGE SCALE ANALYSIS] AT LYS-74; LYS-114; LYS-128; LYS-253; LYS-347; LYS-353 AND LYS-399</scope>
    <scope>IDENTIFICATION BY MASS SPECTROMETRY [LARGE SCALE ANALYSIS]</scope>
    <source>
        <tissue>Liver</tissue>
    </source>
</reference>
<accession>Q8BWF0</accession>
<accession>Q5SZW1</accession>
<keyword id="KW-0007">Acetylation</keyword>
<keyword id="KW-0903">Direct protein sequencing</keyword>
<keyword id="KW-1015">Disulfide bond</keyword>
<keyword id="KW-0496">Mitochondrion</keyword>
<keyword id="KW-0520">NAD</keyword>
<keyword id="KW-0560">Oxidoreductase</keyword>
<keyword id="KW-0597">Phosphoprotein</keyword>
<keyword id="KW-1185">Reference proteome</keyword>
<keyword id="KW-0809">Transit peptide</keyword>
<comment type="function">
    <text evidence="1">Catalyzes one step in the degradation of the inhibitory neurotransmitter gamma-aminobutyric acid (GABA).</text>
</comment>
<comment type="catalytic activity">
    <reaction>
        <text>succinate semialdehyde + NAD(+) + H2O = succinate + NADH + 2 H(+)</text>
        <dbReference type="Rhea" id="RHEA:13217"/>
        <dbReference type="ChEBI" id="CHEBI:15377"/>
        <dbReference type="ChEBI" id="CHEBI:15378"/>
        <dbReference type="ChEBI" id="CHEBI:30031"/>
        <dbReference type="ChEBI" id="CHEBI:57540"/>
        <dbReference type="ChEBI" id="CHEBI:57706"/>
        <dbReference type="ChEBI" id="CHEBI:57945"/>
        <dbReference type="EC" id="1.2.1.24"/>
    </reaction>
</comment>
<comment type="activity regulation">
    <text evidence="1">Redox-regulated. Inhibited under oxydizing conditions (By similarity).</text>
</comment>
<comment type="pathway">
    <text>Amino-acid degradation; 4-aminobutanoate degradation.</text>
</comment>
<comment type="subunit">
    <text evidence="1">Homotetramer.</text>
</comment>
<comment type="subcellular location">
    <subcellularLocation>
        <location evidence="1">Mitochondrion</location>
    </subcellularLocation>
</comment>
<comment type="similarity">
    <text evidence="5">Belongs to the aldehyde dehydrogenase family.</text>
</comment>
<organism>
    <name type="scientific">Mus musculus</name>
    <name type="common">Mouse</name>
    <dbReference type="NCBI Taxonomy" id="10090"/>
    <lineage>
        <taxon>Eukaryota</taxon>
        <taxon>Metazoa</taxon>
        <taxon>Chordata</taxon>
        <taxon>Craniata</taxon>
        <taxon>Vertebrata</taxon>
        <taxon>Euteleostomi</taxon>
        <taxon>Mammalia</taxon>
        <taxon>Eutheria</taxon>
        <taxon>Euarchontoglires</taxon>
        <taxon>Glires</taxon>
        <taxon>Rodentia</taxon>
        <taxon>Myomorpha</taxon>
        <taxon>Muroidea</taxon>
        <taxon>Muridae</taxon>
        <taxon>Murinae</taxon>
        <taxon>Mus</taxon>
        <taxon>Mus</taxon>
    </lineage>
</organism>